<keyword id="KW-0046">Antibiotic resistance</keyword>
<keyword id="KW-1003">Cell membrane</keyword>
<keyword id="KW-0133">Cell shape</keyword>
<keyword id="KW-0961">Cell wall biogenesis/degradation</keyword>
<keyword id="KW-0378">Hydrolase</keyword>
<keyword id="KW-0472">Membrane</keyword>
<keyword id="KW-0573">Peptidoglycan synthesis</keyword>
<keyword id="KW-1185">Reference proteome</keyword>
<keyword id="KW-0812">Transmembrane</keyword>
<keyword id="KW-1133">Transmembrane helix</keyword>
<name>UPPP_THERP</name>
<accession>B9KYE6</accession>
<gene>
    <name evidence="1" type="primary">uppP</name>
    <name type="ordered locus">trd_0491</name>
</gene>
<dbReference type="EC" id="3.6.1.27" evidence="1"/>
<dbReference type="EMBL" id="CP001275">
    <property type="protein sequence ID" value="ACM06101.1"/>
    <property type="molecule type" value="Genomic_DNA"/>
</dbReference>
<dbReference type="RefSeq" id="WP_012641896.1">
    <property type="nucleotide sequence ID" value="NC_011959.1"/>
</dbReference>
<dbReference type="SMR" id="B9KYE6"/>
<dbReference type="STRING" id="309801.trd_0491"/>
<dbReference type="KEGG" id="tro:trd_0491"/>
<dbReference type="eggNOG" id="COG1968">
    <property type="taxonomic scope" value="Bacteria"/>
</dbReference>
<dbReference type="HOGENOM" id="CLU_060296_1_0_0"/>
<dbReference type="OrthoDB" id="9808289at2"/>
<dbReference type="Proteomes" id="UP000000447">
    <property type="component" value="Chromosome"/>
</dbReference>
<dbReference type="GO" id="GO:0005886">
    <property type="term" value="C:plasma membrane"/>
    <property type="evidence" value="ECO:0007669"/>
    <property type="project" value="UniProtKB-SubCell"/>
</dbReference>
<dbReference type="GO" id="GO:0050380">
    <property type="term" value="F:undecaprenyl-diphosphatase activity"/>
    <property type="evidence" value="ECO:0007669"/>
    <property type="project" value="UniProtKB-UniRule"/>
</dbReference>
<dbReference type="GO" id="GO:0071555">
    <property type="term" value="P:cell wall organization"/>
    <property type="evidence" value="ECO:0007669"/>
    <property type="project" value="UniProtKB-KW"/>
</dbReference>
<dbReference type="GO" id="GO:0009252">
    <property type="term" value="P:peptidoglycan biosynthetic process"/>
    <property type="evidence" value="ECO:0007669"/>
    <property type="project" value="UniProtKB-KW"/>
</dbReference>
<dbReference type="GO" id="GO:0008360">
    <property type="term" value="P:regulation of cell shape"/>
    <property type="evidence" value="ECO:0007669"/>
    <property type="project" value="UniProtKB-KW"/>
</dbReference>
<dbReference type="GO" id="GO:0046677">
    <property type="term" value="P:response to antibiotic"/>
    <property type="evidence" value="ECO:0007669"/>
    <property type="project" value="UniProtKB-UniRule"/>
</dbReference>
<dbReference type="HAMAP" id="MF_01006">
    <property type="entry name" value="Undec_diphosphatase"/>
    <property type="match status" value="1"/>
</dbReference>
<dbReference type="InterPro" id="IPR003824">
    <property type="entry name" value="UppP"/>
</dbReference>
<dbReference type="NCBIfam" id="TIGR00753">
    <property type="entry name" value="undec_PP_bacA"/>
    <property type="match status" value="1"/>
</dbReference>
<dbReference type="PANTHER" id="PTHR30622">
    <property type="entry name" value="UNDECAPRENYL-DIPHOSPHATASE"/>
    <property type="match status" value="1"/>
</dbReference>
<dbReference type="PANTHER" id="PTHR30622:SF4">
    <property type="entry name" value="UNDECAPRENYL-DIPHOSPHATASE"/>
    <property type="match status" value="1"/>
</dbReference>
<dbReference type="Pfam" id="PF02673">
    <property type="entry name" value="BacA"/>
    <property type="match status" value="1"/>
</dbReference>
<feature type="chain" id="PRO_1000213162" description="Undecaprenyl-diphosphatase">
    <location>
        <begin position="1"/>
        <end position="278"/>
    </location>
</feature>
<feature type="transmembrane region" description="Helical" evidence="1">
    <location>
        <begin position="14"/>
        <end position="34"/>
    </location>
</feature>
<feature type="transmembrane region" description="Helical" evidence="1">
    <location>
        <begin position="40"/>
        <end position="60"/>
    </location>
</feature>
<feature type="transmembrane region" description="Helical" evidence="1">
    <location>
        <begin position="89"/>
        <end position="109"/>
    </location>
</feature>
<feature type="transmembrane region" description="Helical" evidence="1">
    <location>
        <begin position="121"/>
        <end position="141"/>
    </location>
</feature>
<feature type="transmembrane region" description="Helical" evidence="1">
    <location>
        <begin position="153"/>
        <end position="173"/>
    </location>
</feature>
<feature type="transmembrane region" description="Helical" evidence="1">
    <location>
        <begin position="196"/>
        <end position="216"/>
    </location>
</feature>
<feature type="transmembrane region" description="Helical" evidence="1">
    <location>
        <begin position="227"/>
        <end position="247"/>
    </location>
</feature>
<feature type="transmembrane region" description="Helical" evidence="1">
    <location>
        <begin position="257"/>
        <end position="277"/>
    </location>
</feature>
<proteinExistence type="inferred from homology"/>
<organism>
    <name type="scientific">Thermomicrobium roseum (strain ATCC 27502 / DSM 5159 / P-2)</name>
    <dbReference type="NCBI Taxonomy" id="309801"/>
    <lineage>
        <taxon>Bacteria</taxon>
        <taxon>Pseudomonadati</taxon>
        <taxon>Thermomicrobiota</taxon>
        <taxon>Thermomicrobia</taxon>
        <taxon>Thermomicrobiales</taxon>
        <taxon>Thermomicrobiaceae</taxon>
        <taxon>Thermomicrobium</taxon>
    </lineage>
</organism>
<comment type="function">
    <text evidence="1">Catalyzes the dephosphorylation of undecaprenyl diphosphate (UPP). Confers resistance to bacitracin.</text>
</comment>
<comment type="catalytic activity">
    <reaction evidence="1">
        <text>di-trans,octa-cis-undecaprenyl diphosphate + H2O = di-trans,octa-cis-undecaprenyl phosphate + phosphate + H(+)</text>
        <dbReference type="Rhea" id="RHEA:28094"/>
        <dbReference type="ChEBI" id="CHEBI:15377"/>
        <dbReference type="ChEBI" id="CHEBI:15378"/>
        <dbReference type="ChEBI" id="CHEBI:43474"/>
        <dbReference type="ChEBI" id="CHEBI:58405"/>
        <dbReference type="ChEBI" id="CHEBI:60392"/>
        <dbReference type="EC" id="3.6.1.27"/>
    </reaction>
</comment>
<comment type="subcellular location">
    <subcellularLocation>
        <location evidence="1">Cell membrane</location>
        <topology evidence="1">Multi-pass membrane protein</topology>
    </subcellularLocation>
</comment>
<comment type="miscellaneous">
    <text>Bacitracin is thought to be involved in the inhibition of peptidoglycan synthesis by sequestering undecaprenyl diphosphate, thereby reducing the pool of lipid carrier available.</text>
</comment>
<comment type="similarity">
    <text evidence="1">Belongs to the UppP family.</text>
</comment>
<reference key="1">
    <citation type="journal article" date="2009" name="PLoS ONE">
        <title>Complete genome sequence of the aerobic CO-oxidizing thermophile Thermomicrobium roseum.</title>
        <authorList>
            <person name="Wu D."/>
            <person name="Raymond J."/>
            <person name="Wu M."/>
            <person name="Chatterji S."/>
            <person name="Ren Q."/>
            <person name="Graham J.E."/>
            <person name="Bryant D.A."/>
            <person name="Robb F."/>
            <person name="Colman A."/>
            <person name="Tallon L.J."/>
            <person name="Badger J.H."/>
            <person name="Madupu R."/>
            <person name="Ward N.L."/>
            <person name="Eisen J.A."/>
        </authorList>
    </citation>
    <scope>NUCLEOTIDE SEQUENCE [LARGE SCALE GENOMIC DNA]</scope>
    <source>
        <strain>ATCC 27502 / DSM 5159 / P-2</strain>
    </source>
</reference>
<protein>
    <recommendedName>
        <fullName evidence="1">Undecaprenyl-diphosphatase</fullName>
        <ecNumber evidence="1">3.6.1.27</ecNumber>
    </recommendedName>
    <alternativeName>
        <fullName evidence="1">Bacitracin resistance protein</fullName>
    </alternativeName>
    <alternativeName>
        <fullName evidence="1">Undecaprenyl pyrophosphate phosphatase</fullName>
    </alternativeName>
</protein>
<sequence length="278" mass="29834">MNVWQAAVLGIVQGTTEFLPISSSAHLIVLPWLFDWPEPGLAFNVALHLGTLSAVLAYFWRDLIQIGRAWFAGLIRLRPLEDSASRLGWAVIIGSLPAGLAGFFLNDVIDHFFHSGGGGDTAIVFTSLLLIVLGFVLWLAERYGTRWRSLGELGLRDGLVVGLAQALALLPGVSRSGSTITASLFLGFARPAAARFSFILGIPAIAGAGLLETLKLVETGLPAEQRVLFVTGVASAAITGFLAIAFLLRFLQRYSTSIFIVYRIALGLVLLLVVSFAR</sequence>
<evidence type="ECO:0000255" key="1">
    <source>
        <dbReference type="HAMAP-Rule" id="MF_01006"/>
    </source>
</evidence>